<feature type="chain" id="PRO_1000215527" description="Proline--tRNA ligase">
    <location>
        <begin position="1"/>
        <end position="572"/>
    </location>
</feature>
<dbReference type="EC" id="6.1.1.15" evidence="1"/>
<dbReference type="EMBL" id="CP001396">
    <property type="protein sequence ID" value="ACR65281.1"/>
    <property type="molecule type" value="Genomic_DNA"/>
</dbReference>
<dbReference type="RefSeq" id="WP_001260717.1">
    <property type="nucleotide sequence ID" value="NC_012759.1"/>
</dbReference>
<dbReference type="SMR" id="C4ZRT7"/>
<dbReference type="KEGG" id="ebw:BWG_0187"/>
<dbReference type="HOGENOM" id="CLU_016739_0_0_6"/>
<dbReference type="GO" id="GO:0005829">
    <property type="term" value="C:cytosol"/>
    <property type="evidence" value="ECO:0007669"/>
    <property type="project" value="TreeGrafter"/>
</dbReference>
<dbReference type="GO" id="GO:0002161">
    <property type="term" value="F:aminoacyl-tRNA deacylase activity"/>
    <property type="evidence" value="ECO:0007669"/>
    <property type="project" value="InterPro"/>
</dbReference>
<dbReference type="GO" id="GO:0005524">
    <property type="term" value="F:ATP binding"/>
    <property type="evidence" value="ECO:0007669"/>
    <property type="project" value="UniProtKB-UniRule"/>
</dbReference>
<dbReference type="GO" id="GO:0004827">
    <property type="term" value="F:proline-tRNA ligase activity"/>
    <property type="evidence" value="ECO:0007669"/>
    <property type="project" value="UniProtKB-UniRule"/>
</dbReference>
<dbReference type="GO" id="GO:0006433">
    <property type="term" value="P:prolyl-tRNA aminoacylation"/>
    <property type="evidence" value="ECO:0007669"/>
    <property type="project" value="UniProtKB-UniRule"/>
</dbReference>
<dbReference type="CDD" id="cd04334">
    <property type="entry name" value="ProRS-INS"/>
    <property type="match status" value="1"/>
</dbReference>
<dbReference type="CDD" id="cd00861">
    <property type="entry name" value="ProRS_anticodon_short"/>
    <property type="match status" value="1"/>
</dbReference>
<dbReference type="CDD" id="cd00779">
    <property type="entry name" value="ProRS_core_prok"/>
    <property type="match status" value="1"/>
</dbReference>
<dbReference type="FunFam" id="3.30.930.10:FF:000012">
    <property type="entry name" value="Proline--tRNA ligase"/>
    <property type="match status" value="1"/>
</dbReference>
<dbReference type="FunFam" id="3.30.930.10:FF:000097">
    <property type="entry name" value="Proline--tRNA ligase"/>
    <property type="match status" value="1"/>
</dbReference>
<dbReference type="FunFam" id="3.40.50.800:FF:000006">
    <property type="entry name" value="Proline--tRNA ligase"/>
    <property type="match status" value="1"/>
</dbReference>
<dbReference type="FunFam" id="3.90.960.10:FF:000001">
    <property type="entry name" value="Proline--tRNA ligase"/>
    <property type="match status" value="1"/>
</dbReference>
<dbReference type="Gene3D" id="3.40.50.800">
    <property type="entry name" value="Anticodon-binding domain"/>
    <property type="match status" value="1"/>
</dbReference>
<dbReference type="Gene3D" id="3.30.930.10">
    <property type="entry name" value="Bira Bifunctional Protein, Domain 2"/>
    <property type="match status" value="2"/>
</dbReference>
<dbReference type="Gene3D" id="3.90.960.10">
    <property type="entry name" value="YbaK/aminoacyl-tRNA synthetase-associated domain"/>
    <property type="match status" value="1"/>
</dbReference>
<dbReference type="HAMAP" id="MF_01569">
    <property type="entry name" value="Pro_tRNA_synth_type1"/>
    <property type="match status" value="1"/>
</dbReference>
<dbReference type="InterPro" id="IPR002314">
    <property type="entry name" value="aa-tRNA-synt_IIb"/>
</dbReference>
<dbReference type="InterPro" id="IPR006195">
    <property type="entry name" value="aa-tRNA-synth_II"/>
</dbReference>
<dbReference type="InterPro" id="IPR045864">
    <property type="entry name" value="aa-tRNA-synth_II/BPL/LPL"/>
</dbReference>
<dbReference type="InterPro" id="IPR004154">
    <property type="entry name" value="Anticodon-bd"/>
</dbReference>
<dbReference type="InterPro" id="IPR036621">
    <property type="entry name" value="Anticodon-bd_dom_sf"/>
</dbReference>
<dbReference type="InterPro" id="IPR002316">
    <property type="entry name" value="Pro-tRNA-ligase_IIa"/>
</dbReference>
<dbReference type="InterPro" id="IPR004500">
    <property type="entry name" value="Pro-tRNA-synth_IIa_bac-type"/>
</dbReference>
<dbReference type="InterPro" id="IPR023717">
    <property type="entry name" value="Pro-tRNA-Synthase_IIa_type1"/>
</dbReference>
<dbReference type="InterPro" id="IPR050062">
    <property type="entry name" value="Pro-tRNA_synthetase"/>
</dbReference>
<dbReference type="InterPro" id="IPR044140">
    <property type="entry name" value="ProRS_anticodon_short"/>
</dbReference>
<dbReference type="InterPro" id="IPR033730">
    <property type="entry name" value="ProRS_core_prok"/>
</dbReference>
<dbReference type="InterPro" id="IPR036754">
    <property type="entry name" value="YbaK/aa-tRNA-synt-asso_dom_sf"/>
</dbReference>
<dbReference type="InterPro" id="IPR007214">
    <property type="entry name" value="YbaK/aa-tRNA-synth-assoc-dom"/>
</dbReference>
<dbReference type="NCBIfam" id="NF006625">
    <property type="entry name" value="PRK09194.1"/>
    <property type="match status" value="1"/>
</dbReference>
<dbReference type="NCBIfam" id="TIGR00409">
    <property type="entry name" value="proS_fam_II"/>
    <property type="match status" value="1"/>
</dbReference>
<dbReference type="PANTHER" id="PTHR42753">
    <property type="entry name" value="MITOCHONDRIAL RIBOSOME PROTEIN L39/PROLYL-TRNA LIGASE FAMILY MEMBER"/>
    <property type="match status" value="1"/>
</dbReference>
<dbReference type="PANTHER" id="PTHR42753:SF2">
    <property type="entry name" value="PROLINE--TRNA LIGASE"/>
    <property type="match status" value="1"/>
</dbReference>
<dbReference type="Pfam" id="PF03129">
    <property type="entry name" value="HGTP_anticodon"/>
    <property type="match status" value="1"/>
</dbReference>
<dbReference type="Pfam" id="PF00587">
    <property type="entry name" value="tRNA-synt_2b"/>
    <property type="match status" value="1"/>
</dbReference>
<dbReference type="Pfam" id="PF04073">
    <property type="entry name" value="tRNA_edit"/>
    <property type="match status" value="1"/>
</dbReference>
<dbReference type="PIRSF" id="PIRSF001535">
    <property type="entry name" value="ProRS_1"/>
    <property type="match status" value="1"/>
</dbReference>
<dbReference type="PRINTS" id="PR01046">
    <property type="entry name" value="TRNASYNTHPRO"/>
</dbReference>
<dbReference type="SUPFAM" id="SSF52954">
    <property type="entry name" value="Class II aaRS ABD-related"/>
    <property type="match status" value="1"/>
</dbReference>
<dbReference type="SUPFAM" id="SSF55681">
    <property type="entry name" value="Class II aaRS and biotin synthetases"/>
    <property type="match status" value="1"/>
</dbReference>
<dbReference type="SUPFAM" id="SSF55826">
    <property type="entry name" value="YbaK/ProRS associated domain"/>
    <property type="match status" value="1"/>
</dbReference>
<dbReference type="PROSITE" id="PS50862">
    <property type="entry name" value="AA_TRNA_LIGASE_II"/>
    <property type="match status" value="1"/>
</dbReference>
<accession>C4ZRT7</accession>
<keyword id="KW-0030">Aminoacyl-tRNA synthetase</keyword>
<keyword id="KW-0067">ATP-binding</keyword>
<keyword id="KW-0963">Cytoplasm</keyword>
<keyword id="KW-0436">Ligase</keyword>
<keyword id="KW-0547">Nucleotide-binding</keyword>
<keyword id="KW-0648">Protein biosynthesis</keyword>
<protein>
    <recommendedName>
        <fullName evidence="1">Proline--tRNA ligase</fullName>
        <ecNumber evidence="1">6.1.1.15</ecNumber>
    </recommendedName>
    <alternativeName>
        <fullName evidence="1">Prolyl-tRNA synthetase</fullName>
        <shortName evidence="1">ProRS</shortName>
    </alternativeName>
</protein>
<name>SYP_ECOBW</name>
<evidence type="ECO:0000255" key="1">
    <source>
        <dbReference type="HAMAP-Rule" id="MF_01569"/>
    </source>
</evidence>
<sequence length="572" mass="63693">MRTSQYLLSTLKETPADAEVISHQLMLRAGMIRKLASGLYTWLPTGVRVLKKVENIVREEMNNAGAIEVSMPVVQPADLWQESGRWEQYGPELLRFVDRGERPFVLGPTHEEVITDLIRNELSSYKQLPLNFYQIQTKFRDEVRPRFGVMRSREFLMKDAYSFHTSQESLQETYDAMYAAYSKIFSRMGLDFRAVQADTGSIGGSASHEFQVLAQSGEDDVVFSDTSDYAANIELAEAIAPKEPRAAATQEMTLVDTPNAKTIAELVEQFNLPIEKTVKTLLVKAVEGSSFPQVALLVRGDHELNEVKAEKLPQVASPLTFATEEEIRAVVKAGPGSLGPVNMPIPVVIDRTVAAMSDFAAGANIDGKHYFGINWDRDVATPEVADIRNVVAGDPSPDGQGRLLIKRGIEVGHIFQLGTKYSEALKASVQGEDGRNQILTMGCYGIGVTRVVAAAIEQNYDERGIVWPDAIAPFQVAILPMNMHKSFRVQELAEKLYSELRAQGIEVLLDDRKERPGVMFADMELIGIPHTIVLGDRNLDNDDIEYKYRRNGEKQLIKTGDIVEYLVKQIKG</sequence>
<comment type="function">
    <text evidence="1">Catalyzes the attachment of proline to tRNA(Pro) in a two-step reaction: proline is first activated by ATP to form Pro-AMP and then transferred to the acceptor end of tRNA(Pro). As ProRS can inadvertently accommodate and process non-cognate amino acids such as alanine and cysteine, to avoid such errors it has two additional distinct editing activities against alanine. One activity is designated as 'pretransfer' editing and involves the tRNA(Pro)-independent hydrolysis of activated Ala-AMP. The other activity is designated 'posttransfer' editing and involves deacylation of mischarged Ala-tRNA(Pro). The misacylated Cys-tRNA(Pro) is not edited by ProRS.</text>
</comment>
<comment type="catalytic activity">
    <reaction evidence="1">
        <text>tRNA(Pro) + L-proline + ATP = L-prolyl-tRNA(Pro) + AMP + diphosphate</text>
        <dbReference type="Rhea" id="RHEA:14305"/>
        <dbReference type="Rhea" id="RHEA-COMP:9700"/>
        <dbReference type="Rhea" id="RHEA-COMP:9702"/>
        <dbReference type="ChEBI" id="CHEBI:30616"/>
        <dbReference type="ChEBI" id="CHEBI:33019"/>
        <dbReference type="ChEBI" id="CHEBI:60039"/>
        <dbReference type="ChEBI" id="CHEBI:78442"/>
        <dbReference type="ChEBI" id="CHEBI:78532"/>
        <dbReference type="ChEBI" id="CHEBI:456215"/>
        <dbReference type="EC" id="6.1.1.15"/>
    </reaction>
</comment>
<comment type="subunit">
    <text evidence="1">Homodimer.</text>
</comment>
<comment type="subcellular location">
    <subcellularLocation>
        <location evidence="1">Cytoplasm</location>
    </subcellularLocation>
</comment>
<comment type="domain">
    <text evidence="1">Consists of three domains: the N-terminal catalytic domain, the editing domain and the C-terminal anticodon-binding domain.</text>
</comment>
<comment type="similarity">
    <text evidence="1">Belongs to the class-II aminoacyl-tRNA synthetase family. ProS type 1 subfamily.</text>
</comment>
<proteinExistence type="inferred from homology"/>
<gene>
    <name evidence="1" type="primary">proS</name>
    <name type="ordered locus">BWG_0187</name>
</gene>
<organism>
    <name type="scientific">Escherichia coli (strain K12 / MC4100 / BW2952)</name>
    <dbReference type="NCBI Taxonomy" id="595496"/>
    <lineage>
        <taxon>Bacteria</taxon>
        <taxon>Pseudomonadati</taxon>
        <taxon>Pseudomonadota</taxon>
        <taxon>Gammaproteobacteria</taxon>
        <taxon>Enterobacterales</taxon>
        <taxon>Enterobacteriaceae</taxon>
        <taxon>Escherichia</taxon>
    </lineage>
</organism>
<reference key="1">
    <citation type="journal article" date="2009" name="J. Bacteriol.">
        <title>Genomic sequencing reveals regulatory mutations and recombinational events in the widely used MC4100 lineage of Escherichia coli K-12.</title>
        <authorList>
            <person name="Ferenci T."/>
            <person name="Zhou Z."/>
            <person name="Betteridge T."/>
            <person name="Ren Y."/>
            <person name="Liu Y."/>
            <person name="Feng L."/>
            <person name="Reeves P.R."/>
            <person name="Wang L."/>
        </authorList>
    </citation>
    <scope>NUCLEOTIDE SEQUENCE [LARGE SCALE GENOMIC DNA]</scope>
    <source>
        <strain>K12 / MC4100 / BW2952</strain>
    </source>
</reference>